<protein>
    <recommendedName>
        <fullName evidence="1">Inosine-5'-monophosphate dehydrogenase</fullName>
        <shortName evidence="1">IMP dehydrogenase</shortName>
        <shortName evidence="1">IMPD</shortName>
        <shortName evidence="1">IMPDH</shortName>
        <ecNumber evidence="1">1.1.1.205</ecNumber>
    </recommendedName>
</protein>
<comment type="function">
    <text evidence="1">Catalyzes the conversion of inosine 5'-phosphate (IMP) to xanthosine 5'-phosphate (XMP), the first committed and rate-limiting step in the de novo synthesis of guanine nucleotides, and therefore plays an important role in the regulation of cell growth.</text>
</comment>
<comment type="catalytic activity">
    <reaction evidence="1">
        <text>IMP + NAD(+) + H2O = XMP + NADH + H(+)</text>
        <dbReference type="Rhea" id="RHEA:11708"/>
        <dbReference type="ChEBI" id="CHEBI:15377"/>
        <dbReference type="ChEBI" id="CHEBI:15378"/>
        <dbReference type="ChEBI" id="CHEBI:57464"/>
        <dbReference type="ChEBI" id="CHEBI:57540"/>
        <dbReference type="ChEBI" id="CHEBI:57945"/>
        <dbReference type="ChEBI" id="CHEBI:58053"/>
        <dbReference type="EC" id="1.1.1.205"/>
    </reaction>
</comment>
<comment type="cofactor">
    <cofactor evidence="1">
        <name>K(+)</name>
        <dbReference type="ChEBI" id="CHEBI:29103"/>
    </cofactor>
</comment>
<comment type="activity regulation">
    <text evidence="1">Mycophenolic acid (MPA) is a non-competitive inhibitor that prevents formation of the closed enzyme conformation by binding to the same site as the amobile flap. In contrast, mizoribine monophosphate (MZP) is a competitive inhibitor that induces the closed conformation. MPA is a potent inhibitor of mammalian IMPDHs but a poor inhibitor of the bacterial enzymes. MZP is a more potent inhibitor of bacterial IMPDH.</text>
</comment>
<comment type="pathway">
    <text evidence="1">Purine metabolism; XMP biosynthesis via de novo pathway; XMP from IMP: step 1/1.</text>
</comment>
<comment type="subunit">
    <text evidence="1">Homotetramer.</text>
</comment>
<comment type="similarity">
    <text evidence="1">Belongs to the IMPDH/GMPR family.</text>
</comment>
<reference key="1">
    <citation type="journal article" date="2005" name="J. Bacteriol.">
        <title>Insights on evolution of virulence and resistance from the complete genome analysis of an early methicillin-resistant Staphylococcus aureus strain and a biofilm-producing methicillin-resistant Staphylococcus epidermidis strain.</title>
        <authorList>
            <person name="Gill S.R."/>
            <person name="Fouts D.E."/>
            <person name="Archer G.L."/>
            <person name="Mongodin E.F."/>
            <person name="DeBoy R.T."/>
            <person name="Ravel J."/>
            <person name="Paulsen I.T."/>
            <person name="Kolonay J.F."/>
            <person name="Brinkac L.M."/>
            <person name="Beanan M.J."/>
            <person name="Dodson R.J."/>
            <person name="Daugherty S.C."/>
            <person name="Madupu R."/>
            <person name="Angiuoli S.V."/>
            <person name="Durkin A.S."/>
            <person name="Haft D.H."/>
            <person name="Vamathevan J.J."/>
            <person name="Khouri H."/>
            <person name="Utterback T.R."/>
            <person name="Lee C."/>
            <person name="Dimitrov G."/>
            <person name="Jiang L."/>
            <person name="Qin H."/>
            <person name="Weidman J."/>
            <person name="Tran K."/>
            <person name="Kang K.H."/>
            <person name="Hance I.R."/>
            <person name="Nelson K.E."/>
            <person name="Fraser C.M."/>
        </authorList>
    </citation>
    <scope>NUCLEOTIDE SEQUENCE [LARGE SCALE GENOMIC DNA]</scope>
    <source>
        <strain>COL</strain>
    </source>
</reference>
<accession>Q5HIQ7</accession>
<dbReference type="EC" id="1.1.1.205" evidence="1"/>
<dbReference type="EMBL" id="CP000046">
    <property type="protein sequence ID" value="AAW38927.1"/>
    <property type="molecule type" value="Genomic_DNA"/>
</dbReference>
<dbReference type="RefSeq" id="WP_000264071.1">
    <property type="nucleotide sequence ID" value="NZ_JBGOFO010000001.1"/>
</dbReference>
<dbReference type="SMR" id="Q5HIQ7"/>
<dbReference type="GeneID" id="66838696"/>
<dbReference type="KEGG" id="sac:SACOL0460"/>
<dbReference type="HOGENOM" id="CLU_022552_1_0_9"/>
<dbReference type="UniPathway" id="UPA00601">
    <property type="reaction ID" value="UER00295"/>
</dbReference>
<dbReference type="Proteomes" id="UP000000530">
    <property type="component" value="Chromosome"/>
</dbReference>
<dbReference type="GO" id="GO:0003938">
    <property type="term" value="F:IMP dehydrogenase activity"/>
    <property type="evidence" value="ECO:0007669"/>
    <property type="project" value="UniProtKB-UniRule"/>
</dbReference>
<dbReference type="GO" id="GO:0046872">
    <property type="term" value="F:metal ion binding"/>
    <property type="evidence" value="ECO:0007669"/>
    <property type="project" value="UniProtKB-UniRule"/>
</dbReference>
<dbReference type="GO" id="GO:0000166">
    <property type="term" value="F:nucleotide binding"/>
    <property type="evidence" value="ECO:0007669"/>
    <property type="project" value="UniProtKB-UniRule"/>
</dbReference>
<dbReference type="GO" id="GO:0006177">
    <property type="term" value="P:GMP biosynthetic process"/>
    <property type="evidence" value="ECO:0007669"/>
    <property type="project" value="UniProtKB-UniRule"/>
</dbReference>
<dbReference type="GO" id="GO:0006183">
    <property type="term" value="P:GTP biosynthetic process"/>
    <property type="evidence" value="ECO:0007669"/>
    <property type="project" value="TreeGrafter"/>
</dbReference>
<dbReference type="CDD" id="cd04601">
    <property type="entry name" value="CBS_pair_IMPDH"/>
    <property type="match status" value="1"/>
</dbReference>
<dbReference type="CDD" id="cd00381">
    <property type="entry name" value="IMPDH"/>
    <property type="match status" value="1"/>
</dbReference>
<dbReference type="FunFam" id="3.20.20.70:FF:000003">
    <property type="entry name" value="GMP reductase"/>
    <property type="match status" value="1"/>
</dbReference>
<dbReference type="Gene3D" id="3.20.20.70">
    <property type="entry name" value="Aldolase class I"/>
    <property type="match status" value="1"/>
</dbReference>
<dbReference type="HAMAP" id="MF_01964">
    <property type="entry name" value="IMPDH"/>
    <property type="match status" value="1"/>
</dbReference>
<dbReference type="InterPro" id="IPR013785">
    <property type="entry name" value="Aldolase_TIM"/>
</dbReference>
<dbReference type="InterPro" id="IPR000644">
    <property type="entry name" value="CBS_dom"/>
</dbReference>
<dbReference type="InterPro" id="IPR046342">
    <property type="entry name" value="CBS_dom_sf"/>
</dbReference>
<dbReference type="InterPro" id="IPR005990">
    <property type="entry name" value="IMP_DH"/>
</dbReference>
<dbReference type="InterPro" id="IPR015875">
    <property type="entry name" value="IMP_DH/GMP_Rdtase_CS"/>
</dbReference>
<dbReference type="InterPro" id="IPR001093">
    <property type="entry name" value="IMP_DH_GMPRt"/>
</dbReference>
<dbReference type="NCBIfam" id="TIGR01302">
    <property type="entry name" value="IMP_dehydrog"/>
    <property type="match status" value="1"/>
</dbReference>
<dbReference type="PANTHER" id="PTHR11911:SF111">
    <property type="entry name" value="INOSINE-5'-MONOPHOSPHATE DEHYDROGENASE"/>
    <property type="match status" value="1"/>
</dbReference>
<dbReference type="PANTHER" id="PTHR11911">
    <property type="entry name" value="INOSINE-5-MONOPHOSPHATE DEHYDROGENASE RELATED"/>
    <property type="match status" value="1"/>
</dbReference>
<dbReference type="Pfam" id="PF00571">
    <property type="entry name" value="CBS"/>
    <property type="match status" value="2"/>
</dbReference>
<dbReference type="Pfam" id="PF00478">
    <property type="entry name" value="IMPDH"/>
    <property type="match status" value="1"/>
</dbReference>
<dbReference type="PIRSF" id="PIRSF000130">
    <property type="entry name" value="IMPDH"/>
    <property type="match status" value="1"/>
</dbReference>
<dbReference type="SMART" id="SM00116">
    <property type="entry name" value="CBS"/>
    <property type="match status" value="2"/>
</dbReference>
<dbReference type="SMART" id="SM01240">
    <property type="entry name" value="IMPDH"/>
    <property type="match status" value="1"/>
</dbReference>
<dbReference type="SUPFAM" id="SSF54631">
    <property type="entry name" value="CBS-domain pair"/>
    <property type="match status" value="1"/>
</dbReference>
<dbReference type="SUPFAM" id="SSF51412">
    <property type="entry name" value="Inosine monophosphate dehydrogenase (IMPDH)"/>
    <property type="match status" value="1"/>
</dbReference>
<dbReference type="PROSITE" id="PS51371">
    <property type="entry name" value="CBS"/>
    <property type="match status" value="2"/>
</dbReference>
<dbReference type="PROSITE" id="PS00487">
    <property type="entry name" value="IMP_DH_GMP_RED"/>
    <property type="match status" value="1"/>
</dbReference>
<name>IMDH_STAAC</name>
<keyword id="KW-0129">CBS domain</keyword>
<keyword id="KW-0332">GMP biosynthesis</keyword>
<keyword id="KW-0479">Metal-binding</keyword>
<keyword id="KW-0520">NAD</keyword>
<keyword id="KW-0560">Oxidoreductase</keyword>
<keyword id="KW-0630">Potassium</keyword>
<keyword id="KW-0658">Purine biosynthesis</keyword>
<keyword id="KW-0677">Repeat</keyword>
<proteinExistence type="inferred from homology"/>
<organism>
    <name type="scientific">Staphylococcus aureus (strain COL)</name>
    <dbReference type="NCBI Taxonomy" id="93062"/>
    <lineage>
        <taxon>Bacteria</taxon>
        <taxon>Bacillati</taxon>
        <taxon>Bacillota</taxon>
        <taxon>Bacilli</taxon>
        <taxon>Bacillales</taxon>
        <taxon>Staphylococcaceae</taxon>
        <taxon>Staphylococcus</taxon>
    </lineage>
</organism>
<evidence type="ECO:0000255" key="1">
    <source>
        <dbReference type="HAMAP-Rule" id="MF_01964"/>
    </source>
</evidence>
<evidence type="ECO:0000256" key="2">
    <source>
        <dbReference type="SAM" id="MobiDB-lite"/>
    </source>
</evidence>
<gene>
    <name evidence="1" type="primary">guaB</name>
    <name type="ordered locus">SACOL0460</name>
</gene>
<feature type="chain" id="PRO_0000093706" description="Inosine-5'-monophosphate dehydrogenase">
    <location>
        <begin position="1"/>
        <end position="488"/>
    </location>
</feature>
<feature type="domain" description="CBS 1" evidence="1">
    <location>
        <begin position="95"/>
        <end position="153"/>
    </location>
</feature>
<feature type="domain" description="CBS 2" evidence="1">
    <location>
        <begin position="157"/>
        <end position="216"/>
    </location>
</feature>
<feature type="region of interest" description="Disordered" evidence="2">
    <location>
        <begin position="468"/>
        <end position="488"/>
    </location>
</feature>
<feature type="compositionally biased region" description="Polar residues" evidence="2">
    <location>
        <begin position="475"/>
        <end position="488"/>
    </location>
</feature>
<feature type="active site" description="Thioimidate intermediate" evidence="1">
    <location>
        <position position="307"/>
    </location>
</feature>
<feature type="active site" description="Proton acceptor" evidence="1">
    <location>
        <position position="403"/>
    </location>
</feature>
<feature type="binding site" evidence="1">
    <location>
        <position position="250"/>
    </location>
    <ligand>
        <name>NAD(+)</name>
        <dbReference type="ChEBI" id="CHEBI:57540"/>
    </ligand>
</feature>
<feature type="binding site" evidence="1">
    <location>
        <begin position="300"/>
        <end position="302"/>
    </location>
    <ligand>
        <name>NAD(+)</name>
        <dbReference type="ChEBI" id="CHEBI:57540"/>
    </ligand>
</feature>
<feature type="binding site" description="in other chain" evidence="1">
    <location>
        <position position="302"/>
    </location>
    <ligand>
        <name>K(+)</name>
        <dbReference type="ChEBI" id="CHEBI:29103"/>
        <note>ligand shared between two tetrameric partners</note>
    </ligand>
</feature>
<feature type="binding site" description="in other chain" evidence="1">
    <location>
        <position position="304"/>
    </location>
    <ligand>
        <name>K(+)</name>
        <dbReference type="ChEBI" id="CHEBI:29103"/>
        <note>ligand shared between two tetrameric partners</note>
    </ligand>
</feature>
<feature type="binding site" evidence="1">
    <location>
        <position position="305"/>
    </location>
    <ligand>
        <name>IMP</name>
        <dbReference type="ChEBI" id="CHEBI:58053"/>
    </ligand>
</feature>
<feature type="binding site" description="in other chain" evidence="1">
    <location>
        <position position="307"/>
    </location>
    <ligand>
        <name>K(+)</name>
        <dbReference type="ChEBI" id="CHEBI:29103"/>
        <note>ligand shared between two tetrameric partners</note>
    </ligand>
</feature>
<feature type="binding site" evidence="1">
    <location>
        <begin position="340"/>
        <end position="342"/>
    </location>
    <ligand>
        <name>IMP</name>
        <dbReference type="ChEBI" id="CHEBI:58053"/>
    </ligand>
</feature>
<feature type="binding site" evidence="1">
    <location>
        <begin position="363"/>
        <end position="364"/>
    </location>
    <ligand>
        <name>IMP</name>
        <dbReference type="ChEBI" id="CHEBI:58053"/>
    </ligand>
</feature>
<feature type="binding site" evidence="1">
    <location>
        <begin position="387"/>
        <end position="391"/>
    </location>
    <ligand>
        <name>IMP</name>
        <dbReference type="ChEBI" id="CHEBI:58053"/>
    </ligand>
</feature>
<feature type="binding site" evidence="1">
    <location>
        <position position="417"/>
    </location>
    <ligand>
        <name>IMP</name>
        <dbReference type="ChEBI" id="CHEBI:58053"/>
    </ligand>
</feature>
<feature type="binding site" evidence="1">
    <location>
        <position position="471"/>
    </location>
    <ligand>
        <name>K(+)</name>
        <dbReference type="ChEBI" id="CHEBI:29103"/>
        <note>ligand shared between two tetrameric partners</note>
    </ligand>
</feature>
<feature type="binding site" evidence="1">
    <location>
        <position position="472"/>
    </location>
    <ligand>
        <name>K(+)</name>
        <dbReference type="ChEBI" id="CHEBI:29103"/>
        <note>ligand shared between two tetrameric partners</note>
    </ligand>
</feature>
<feature type="binding site" evidence="1">
    <location>
        <position position="473"/>
    </location>
    <ligand>
        <name>K(+)</name>
        <dbReference type="ChEBI" id="CHEBI:29103"/>
        <note>ligand shared between two tetrameric partners</note>
    </ligand>
</feature>
<sequence>MWESKFAKESLTFDDVLLIPAQSDILPKDVDLSVQLSDKVKLNIPVISAGMDTVTESKMAIAMARQGGLGVIHKNMGVEEQADEVQKVKRSENGVISNPFFLTPEESVYEAEALMGKYRISGVPIVDNKEDRNLVGILTNRDLRFIEDFSIKIVDVMTQENLITAPVNTTLEEAEKILQKHKIEKLPLVKDGRLEGLITIKDIEKVIEFPNAAKDEHGRLLVAAAIGISKDTDIRAQKLVEAGVDVLVIDTAHGHSKGVIDQVKHIKKTYPEITLVAGNVATAEATKDLFEAGADIVKVGIGPGSICTTRVVAGVGVPQITAIYDCATEARKHGKAIIADGGIKFSGDIIKALAAGGHAVMLGSLLAGTEESPGATEIFQGRQYKVYRGMGSLGAMEKGSNDRYFQEDKAPKKFVPEGIEGRTAYKGALQDTIYQLMGGVRAGMGYTGSHDLRELREEAQFTRMGPAGLAESHPHNIQITKESPNYSF</sequence>